<reference key="1">
    <citation type="journal article" date="1999" name="J. Biol. Chem.">
        <title>Identification and characterization of cvHsp. A novel human small stress protein selectively expressed in cardiovascular and insulin-sensitive tissues.</title>
        <authorList>
            <person name="Krief S."/>
            <person name="Faivre J.-F."/>
            <person name="Robert P."/>
            <person name="Le Douarin B."/>
            <person name="Brument-Larignon N."/>
            <person name="Lefrere I."/>
            <person name="Bouzyk M.M."/>
            <person name="Anderson K.M."/>
            <person name="Greller L.D."/>
            <person name="Tobin F.L."/>
            <person name="Souchet M."/>
            <person name="Bril A."/>
        </authorList>
    </citation>
    <scope>NUCLEOTIDE SEQUENCE [MRNA]</scope>
    <source>
        <tissue>Heart</tissue>
    </source>
</reference>
<gene>
    <name type="primary">Hspb7</name>
    <name type="synonym">Cvhsp</name>
</gene>
<sequence length="90" mass="9804">SSSSSSASRALPAQDPPMEKALSMFSEDFGSFMLPHSEPLTFPARPGGQGNIKTLGDAYEFTVDMRDFSPEDIIVTTSNNHIEVRAEKKP</sequence>
<feature type="chain" id="PRO_0000125943" description="Heat shock protein beta-7">
    <location>
        <begin position="1" status="less than"/>
        <end position="90" status="greater than"/>
    </location>
</feature>
<feature type="domain" description="sHSP" evidence="2">
    <location>
        <begin position="39"/>
        <end position="90" status="greater than"/>
    </location>
</feature>
<feature type="non-terminal residue">
    <location>
        <position position="1"/>
    </location>
</feature>
<feature type="non-terminal residue">
    <location>
        <position position="90"/>
    </location>
</feature>
<organism>
    <name type="scientific">Rattus norvegicus</name>
    <name type="common">Rat</name>
    <dbReference type="NCBI Taxonomy" id="10116"/>
    <lineage>
        <taxon>Eukaryota</taxon>
        <taxon>Metazoa</taxon>
        <taxon>Chordata</taxon>
        <taxon>Craniata</taxon>
        <taxon>Vertebrata</taxon>
        <taxon>Euteleostomi</taxon>
        <taxon>Mammalia</taxon>
        <taxon>Eutheria</taxon>
        <taxon>Euarchontoglires</taxon>
        <taxon>Glires</taxon>
        <taxon>Rodentia</taxon>
        <taxon>Myomorpha</taxon>
        <taxon>Muroidea</taxon>
        <taxon>Muridae</taxon>
        <taxon>Murinae</taxon>
        <taxon>Rattus</taxon>
    </lineage>
</organism>
<accession>Q9QUK5</accession>
<dbReference type="EMBL" id="AJ243193">
    <property type="protein sequence ID" value="CAB63268.1"/>
    <property type="molecule type" value="mRNA"/>
</dbReference>
<dbReference type="EMBL" id="AF155910">
    <property type="protein sequence ID" value="AAF20024.1"/>
    <property type="molecule type" value="mRNA"/>
</dbReference>
<dbReference type="STRING" id="10116.ENSRNOP00000042240"/>
<dbReference type="PaxDb" id="10116-ENSRNOP00000042240"/>
<dbReference type="UCSC" id="RGD:62021">
    <property type="organism name" value="rat"/>
</dbReference>
<dbReference type="AGR" id="RGD:62021"/>
<dbReference type="RGD" id="62021">
    <property type="gene designation" value="Hspb7"/>
</dbReference>
<dbReference type="eggNOG" id="KOG3591">
    <property type="taxonomic scope" value="Eukaryota"/>
</dbReference>
<dbReference type="InParanoid" id="Q9QUK5"/>
<dbReference type="Proteomes" id="UP000002494">
    <property type="component" value="Unplaced"/>
</dbReference>
<dbReference type="GO" id="GO:0015629">
    <property type="term" value="C:actin cytoskeleton"/>
    <property type="evidence" value="ECO:0000266"/>
    <property type="project" value="RGD"/>
</dbReference>
<dbReference type="GO" id="GO:0015030">
    <property type="term" value="C:Cajal body"/>
    <property type="evidence" value="ECO:0007669"/>
    <property type="project" value="UniProtKB-SubCell"/>
</dbReference>
<dbReference type="GO" id="GO:0005737">
    <property type="term" value="C:cytoplasm"/>
    <property type="evidence" value="ECO:0000266"/>
    <property type="project" value="RGD"/>
</dbReference>
<dbReference type="GO" id="GO:0005634">
    <property type="term" value="C:nucleus"/>
    <property type="evidence" value="ECO:0000250"/>
    <property type="project" value="UniProtKB"/>
</dbReference>
<dbReference type="GO" id="GO:0031005">
    <property type="term" value="F:filamin binding"/>
    <property type="evidence" value="ECO:0000266"/>
    <property type="project" value="RGD"/>
</dbReference>
<dbReference type="Gene3D" id="2.60.40.790">
    <property type="match status" value="1"/>
</dbReference>
<dbReference type="InterPro" id="IPR002068">
    <property type="entry name" value="A-crystallin/Hsp20_dom"/>
</dbReference>
<dbReference type="InterPro" id="IPR008978">
    <property type="entry name" value="HSP20-like_chaperone"/>
</dbReference>
<dbReference type="PANTHER" id="PTHR46907:SF2">
    <property type="entry name" value="HEAT SHOCK PROTEIN BETA-7"/>
    <property type="match status" value="1"/>
</dbReference>
<dbReference type="PANTHER" id="PTHR46907">
    <property type="entry name" value="HEAT SHOCK PROTEIN BETA-7-RELATED"/>
    <property type="match status" value="1"/>
</dbReference>
<dbReference type="Pfam" id="PF00011">
    <property type="entry name" value="HSP20"/>
    <property type="match status" value="1"/>
</dbReference>
<dbReference type="SUPFAM" id="SSF49764">
    <property type="entry name" value="HSP20-like chaperones"/>
    <property type="match status" value="1"/>
</dbReference>
<dbReference type="PROSITE" id="PS01031">
    <property type="entry name" value="SHSP"/>
    <property type="match status" value="1"/>
</dbReference>
<proteinExistence type="evidence at transcript level"/>
<comment type="subunit">
    <text evidence="1">Interacts with C-terminal domain of actin-binding protein 280.</text>
</comment>
<comment type="subcellular location">
    <subcellularLocation>
        <location evidence="1">Cytoplasm</location>
    </subcellularLocation>
    <subcellularLocation>
        <location evidence="1">Nucleus</location>
    </subcellularLocation>
    <subcellularLocation>
        <location evidence="1">Nucleus</location>
        <location evidence="1">Cajal body</location>
    </subcellularLocation>
    <text evidence="1">Resides in sub-nuclear structures known as SC35 speckles or nuclear splicing speckles.</text>
</comment>
<comment type="tissue specificity">
    <text>Found in both cardiac and skeletal muscle.</text>
</comment>
<comment type="similarity">
    <text evidence="2">Belongs to the small heat shock protein (HSP20) family.</text>
</comment>
<name>HSPB7_RAT</name>
<evidence type="ECO:0000250" key="1"/>
<evidence type="ECO:0000255" key="2">
    <source>
        <dbReference type="PROSITE-ProRule" id="PRU00285"/>
    </source>
</evidence>
<protein>
    <recommendedName>
        <fullName>Heat shock protein beta-7</fullName>
        <shortName>HspB7</shortName>
    </recommendedName>
    <alternativeName>
        <fullName>Cardiovascular heat shock protein</fullName>
        <shortName>cvHsp</shortName>
    </alternativeName>
</protein>
<keyword id="KW-0143">Chaperone</keyword>
<keyword id="KW-0963">Cytoplasm</keyword>
<keyword id="KW-0539">Nucleus</keyword>
<keyword id="KW-1185">Reference proteome</keyword>
<keyword id="KW-0346">Stress response</keyword>